<feature type="chain" id="PRO_1000073214" description="Small ribosomal subunit protein uS13">
    <location>
        <begin position="1"/>
        <end position="121"/>
    </location>
</feature>
<feature type="region of interest" description="Disordered" evidence="2">
    <location>
        <begin position="91"/>
        <end position="121"/>
    </location>
</feature>
<proteinExistence type="inferred from homology"/>
<organism>
    <name type="scientific">Staphylococcus aureus (strain Newman)</name>
    <dbReference type="NCBI Taxonomy" id="426430"/>
    <lineage>
        <taxon>Bacteria</taxon>
        <taxon>Bacillati</taxon>
        <taxon>Bacillota</taxon>
        <taxon>Bacilli</taxon>
        <taxon>Bacillales</taxon>
        <taxon>Staphylococcaceae</taxon>
        <taxon>Staphylococcus</taxon>
    </lineage>
</organism>
<sequence length="121" mass="13719">MARIAGVDIPREKRVVISLTYIYGIGTSTAQKILEEANVSADTRVKDLTDDELGRIREVVDGYKVEGDLRRETNLNIKRLMEISSYRGIRHRRGLPVRGQKTKNNARTRKGPVKTVANKKK</sequence>
<keyword id="KW-0687">Ribonucleoprotein</keyword>
<keyword id="KW-0689">Ribosomal protein</keyword>
<keyword id="KW-0694">RNA-binding</keyword>
<keyword id="KW-0699">rRNA-binding</keyword>
<keyword id="KW-0820">tRNA-binding</keyword>
<reference key="1">
    <citation type="journal article" date="2008" name="J. Bacteriol.">
        <title>Genome sequence of Staphylococcus aureus strain Newman and comparative analysis of staphylococcal genomes: polymorphism and evolution of two major pathogenicity islands.</title>
        <authorList>
            <person name="Baba T."/>
            <person name="Bae T."/>
            <person name="Schneewind O."/>
            <person name="Takeuchi F."/>
            <person name="Hiramatsu K."/>
        </authorList>
    </citation>
    <scope>NUCLEOTIDE SEQUENCE [LARGE SCALE GENOMIC DNA]</scope>
    <source>
        <strain>Newman</strain>
    </source>
</reference>
<evidence type="ECO:0000255" key="1">
    <source>
        <dbReference type="HAMAP-Rule" id="MF_01315"/>
    </source>
</evidence>
<evidence type="ECO:0000256" key="2">
    <source>
        <dbReference type="SAM" id="MobiDB-lite"/>
    </source>
</evidence>
<evidence type="ECO:0000305" key="3"/>
<comment type="function">
    <text evidence="1">Located at the top of the head of the 30S subunit, it contacts several helices of the 16S rRNA. In the 70S ribosome it contacts the 23S rRNA (bridge B1a) and protein L5 of the 50S subunit (bridge B1b), connecting the 2 subunits; these bridges are implicated in subunit movement. Contacts the tRNAs in the A and P-sites.</text>
</comment>
<comment type="subunit">
    <text evidence="1">Part of the 30S ribosomal subunit. Forms a loose heterodimer with protein S19. Forms two bridges to the 50S subunit in the 70S ribosome.</text>
</comment>
<comment type="similarity">
    <text evidence="1">Belongs to the universal ribosomal protein uS13 family.</text>
</comment>
<name>RS13_STAAE</name>
<dbReference type="EMBL" id="AP009351">
    <property type="protein sequence ID" value="BAF68400.1"/>
    <property type="molecule type" value="Genomic_DNA"/>
</dbReference>
<dbReference type="RefSeq" id="WP_000090796.1">
    <property type="nucleotide sequence ID" value="NZ_JBBIAE010000006.1"/>
</dbReference>
<dbReference type="SMR" id="A6QJ68"/>
<dbReference type="GeneID" id="66840438"/>
<dbReference type="KEGG" id="sae:NWMN_2128"/>
<dbReference type="HOGENOM" id="CLU_103849_1_1_9"/>
<dbReference type="Proteomes" id="UP000006386">
    <property type="component" value="Chromosome"/>
</dbReference>
<dbReference type="GO" id="GO:0005829">
    <property type="term" value="C:cytosol"/>
    <property type="evidence" value="ECO:0007669"/>
    <property type="project" value="TreeGrafter"/>
</dbReference>
<dbReference type="GO" id="GO:0015935">
    <property type="term" value="C:small ribosomal subunit"/>
    <property type="evidence" value="ECO:0007669"/>
    <property type="project" value="TreeGrafter"/>
</dbReference>
<dbReference type="GO" id="GO:0019843">
    <property type="term" value="F:rRNA binding"/>
    <property type="evidence" value="ECO:0007669"/>
    <property type="project" value="UniProtKB-UniRule"/>
</dbReference>
<dbReference type="GO" id="GO:0003735">
    <property type="term" value="F:structural constituent of ribosome"/>
    <property type="evidence" value="ECO:0007669"/>
    <property type="project" value="InterPro"/>
</dbReference>
<dbReference type="GO" id="GO:0000049">
    <property type="term" value="F:tRNA binding"/>
    <property type="evidence" value="ECO:0007669"/>
    <property type="project" value="UniProtKB-UniRule"/>
</dbReference>
<dbReference type="GO" id="GO:0006412">
    <property type="term" value="P:translation"/>
    <property type="evidence" value="ECO:0007669"/>
    <property type="project" value="UniProtKB-UniRule"/>
</dbReference>
<dbReference type="FunFam" id="1.10.8.50:FF:000001">
    <property type="entry name" value="30S ribosomal protein S13"/>
    <property type="match status" value="1"/>
</dbReference>
<dbReference type="FunFam" id="4.10.910.10:FF:000001">
    <property type="entry name" value="30S ribosomal protein S13"/>
    <property type="match status" value="1"/>
</dbReference>
<dbReference type="Gene3D" id="1.10.8.50">
    <property type="match status" value="1"/>
</dbReference>
<dbReference type="Gene3D" id="4.10.910.10">
    <property type="entry name" value="30s ribosomal protein s13, domain 2"/>
    <property type="match status" value="1"/>
</dbReference>
<dbReference type="HAMAP" id="MF_01315">
    <property type="entry name" value="Ribosomal_uS13"/>
    <property type="match status" value="1"/>
</dbReference>
<dbReference type="InterPro" id="IPR027437">
    <property type="entry name" value="Rbsml_uS13_C"/>
</dbReference>
<dbReference type="InterPro" id="IPR001892">
    <property type="entry name" value="Ribosomal_uS13"/>
</dbReference>
<dbReference type="InterPro" id="IPR010979">
    <property type="entry name" value="Ribosomal_uS13-like_H2TH"/>
</dbReference>
<dbReference type="InterPro" id="IPR019980">
    <property type="entry name" value="Ribosomal_uS13_bac-type"/>
</dbReference>
<dbReference type="InterPro" id="IPR018269">
    <property type="entry name" value="Ribosomal_uS13_CS"/>
</dbReference>
<dbReference type="NCBIfam" id="TIGR03631">
    <property type="entry name" value="uS13_bact"/>
    <property type="match status" value="1"/>
</dbReference>
<dbReference type="PANTHER" id="PTHR10871">
    <property type="entry name" value="30S RIBOSOMAL PROTEIN S13/40S RIBOSOMAL PROTEIN S18"/>
    <property type="match status" value="1"/>
</dbReference>
<dbReference type="PANTHER" id="PTHR10871:SF1">
    <property type="entry name" value="SMALL RIBOSOMAL SUBUNIT PROTEIN US13M"/>
    <property type="match status" value="1"/>
</dbReference>
<dbReference type="Pfam" id="PF00416">
    <property type="entry name" value="Ribosomal_S13"/>
    <property type="match status" value="1"/>
</dbReference>
<dbReference type="PIRSF" id="PIRSF002134">
    <property type="entry name" value="Ribosomal_S13"/>
    <property type="match status" value="1"/>
</dbReference>
<dbReference type="SUPFAM" id="SSF46946">
    <property type="entry name" value="S13-like H2TH domain"/>
    <property type="match status" value="1"/>
</dbReference>
<dbReference type="PROSITE" id="PS00646">
    <property type="entry name" value="RIBOSOMAL_S13_1"/>
    <property type="match status" value="1"/>
</dbReference>
<dbReference type="PROSITE" id="PS50159">
    <property type="entry name" value="RIBOSOMAL_S13_2"/>
    <property type="match status" value="1"/>
</dbReference>
<accession>A6QJ68</accession>
<gene>
    <name evidence="1" type="primary">rpsM</name>
    <name type="ordered locus">NWMN_2128</name>
</gene>
<protein>
    <recommendedName>
        <fullName evidence="1">Small ribosomal subunit protein uS13</fullName>
    </recommendedName>
    <alternativeName>
        <fullName evidence="3">30S ribosomal protein S13</fullName>
    </alternativeName>
</protein>